<feature type="chain" id="PRO_0000149999" description="Cornifin-A">
    <location>
        <begin position="1"/>
        <end position="152"/>
    </location>
</feature>
<feature type="repeat" description="1">
    <location>
        <begin position="27"/>
        <end position="34"/>
    </location>
</feature>
<feature type="repeat" description="2">
    <location>
        <begin position="35"/>
        <end position="42"/>
    </location>
</feature>
<feature type="repeat" description="3">
    <location>
        <begin position="43"/>
        <end position="49"/>
    </location>
</feature>
<feature type="repeat" description="4">
    <location>
        <begin position="50"/>
        <end position="57"/>
    </location>
</feature>
<feature type="repeat" description="5">
    <location>
        <begin position="58"/>
        <end position="65"/>
    </location>
</feature>
<feature type="repeat" description="6">
    <location>
        <begin position="66"/>
        <end position="73"/>
    </location>
</feature>
<feature type="repeat" description="7">
    <location>
        <begin position="74"/>
        <end position="81"/>
    </location>
</feature>
<feature type="repeat" description="8">
    <location>
        <begin position="82"/>
        <end position="89"/>
    </location>
</feature>
<feature type="repeat" description="9">
    <location>
        <begin position="90"/>
        <end position="97"/>
    </location>
</feature>
<feature type="repeat" description="10">
    <location>
        <begin position="98"/>
        <end position="105"/>
    </location>
</feature>
<feature type="repeat" description="11">
    <location>
        <begin position="106"/>
        <end position="113"/>
    </location>
</feature>
<feature type="repeat" description="12">
    <location>
        <begin position="114"/>
        <end position="121"/>
    </location>
</feature>
<feature type="repeat" description="13">
    <location>
        <begin position="122"/>
        <end position="129"/>
    </location>
</feature>
<feature type="repeat" description="14">
    <location>
        <begin position="130"/>
        <end position="137"/>
    </location>
</feature>
<feature type="region of interest" description="Disordered" evidence="1">
    <location>
        <begin position="20"/>
        <end position="40"/>
    </location>
</feature>
<feature type="region of interest" description="14 X 8 AA approximate tandem repeats">
    <location>
        <begin position="27"/>
        <end position="137"/>
    </location>
</feature>
<organism>
    <name type="scientific">Rattus norvegicus</name>
    <name type="common">Rat</name>
    <dbReference type="NCBI Taxonomy" id="10116"/>
    <lineage>
        <taxon>Eukaryota</taxon>
        <taxon>Metazoa</taxon>
        <taxon>Chordata</taxon>
        <taxon>Craniata</taxon>
        <taxon>Vertebrata</taxon>
        <taxon>Euteleostomi</taxon>
        <taxon>Mammalia</taxon>
        <taxon>Eutheria</taxon>
        <taxon>Euarchontoglires</taxon>
        <taxon>Glires</taxon>
        <taxon>Rodentia</taxon>
        <taxon>Myomorpha</taxon>
        <taxon>Muroidea</taxon>
        <taxon>Muridae</taxon>
        <taxon>Murinae</taxon>
        <taxon>Rattus</taxon>
    </lineage>
</organism>
<dbReference type="EMBL" id="L46593">
    <property type="protein sequence ID" value="AAC42092.1"/>
    <property type="molecule type" value="Genomic_DNA"/>
</dbReference>
<dbReference type="STRING" id="10116.ENSRNOP00000012174"/>
<dbReference type="GlyGen" id="Q63532">
    <property type="glycosylation" value="1 site"/>
</dbReference>
<dbReference type="PhosphoSitePlus" id="Q63532"/>
<dbReference type="PaxDb" id="10116-ENSRNOP00000012174"/>
<dbReference type="AGR" id="RGD:1593163"/>
<dbReference type="RGD" id="1593163">
    <property type="gene designation" value="Sprr1a"/>
</dbReference>
<dbReference type="eggNOG" id="ENOG502SCIR">
    <property type="taxonomic scope" value="Eukaryota"/>
</dbReference>
<dbReference type="InParanoid" id="Q63532"/>
<dbReference type="OrthoDB" id="9837279at2759"/>
<dbReference type="PhylomeDB" id="Q63532"/>
<dbReference type="PRO" id="PR:Q63532"/>
<dbReference type="Proteomes" id="UP000002494">
    <property type="component" value="Unplaced"/>
</dbReference>
<dbReference type="GO" id="GO:0071944">
    <property type="term" value="C:cell periphery"/>
    <property type="evidence" value="ECO:0000266"/>
    <property type="project" value="RGD"/>
</dbReference>
<dbReference type="GO" id="GO:0001533">
    <property type="term" value="C:cornified envelope"/>
    <property type="evidence" value="ECO:0000266"/>
    <property type="project" value="RGD"/>
</dbReference>
<dbReference type="GO" id="GO:0005737">
    <property type="term" value="C:cytoplasm"/>
    <property type="evidence" value="ECO:0007669"/>
    <property type="project" value="UniProtKB-SubCell"/>
</dbReference>
<dbReference type="GO" id="GO:0030280">
    <property type="term" value="F:structural constituent of skin epidermis"/>
    <property type="evidence" value="ECO:0000266"/>
    <property type="project" value="RGD"/>
</dbReference>
<dbReference type="GO" id="GO:0031424">
    <property type="term" value="P:keratinization"/>
    <property type="evidence" value="ECO:0007669"/>
    <property type="project" value="UniProtKB-KW"/>
</dbReference>
<dbReference type="GO" id="GO:0030216">
    <property type="term" value="P:keratinocyte differentiation"/>
    <property type="evidence" value="ECO:0000266"/>
    <property type="project" value="RGD"/>
</dbReference>
<dbReference type="Pfam" id="PF02389">
    <property type="entry name" value="Cornifin"/>
    <property type="match status" value="1"/>
</dbReference>
<dbReference type="PRINTS" id="PR00021">
    <property type="entry name" value="PRORICH"/>
</dbReference>
<gene>
    <name type="primary">Sprr1a</name>
    <name type="synonym">Spr</name>
    <name type="synonym">Sprr1</name>
</gene>
<evidence type="ECO:0000256" key="1">
    <source>
        <dbReference type="SAM" id="MobiDB-lite"/>
    </source>
</evidence>
<evidence type="ECO:0000305" key="2"/>
<keyword id="KW-0963">Cytoplasm</keyword>
<keyword id="KW-0417">Keratinization</keyword>
<keyword id="KW-1185">Reference proteome</keyword>
<keyword id="KW-0677">Repeat</keyword>
<proteinExistence type="evidence at transcript level"/>
<name>SPR1A_RAT</name>
<accession>Q63532</accession>
<comment type="function">
    <text>Cross-linked envelope protein of keratinocytes. It is a keratinocyte protein that first appears in the cell cytosol, but ultimately becomes cross-linked to membrane proteins by transglutaminase. All that results in the formation of an insoluble envelope beneath the plasma membrane.</text>
</comment>
<comment type="subcellular location">
    <subcellularLocation>
        <location>Cytoplasm</location>
    </subcellularLocation>
</comment>
<comment type="tissue specificity">
    <text>In squamous epithelia lining the nasal vestibule and in the hard palate.</text>
</comment>
<comment type="induction">
    <text>During squamous metaplasia induced by cigarette smoke exposure.</text>
</comment>
<comment type="similarity">
    <text evidence="2">Belongs to the cornifin (SPRR) family.</text>
</comment>
<protein>
    <recommendedName>
        <fullName>Cornifin-A</fullName>
    </recommendedName>
    <alternativeName>
        <fullName>Small proline-rich protein 1A</fullName>
        <shortName>SPR1A</shortName>
        <shortName>SPRR1</shortName>
    </alternativeName>
</protein>
<reference key="1">
    <citation type="journal article" date="1996" name="Am. J. Respir. Cell Mol. Biol.">
        <title>A small proline-rich protein, SPRR1, is upregulated early during tobacco smoke-induced squamous metaplasia in rat nasal epithelia.</title>
        <authorList>
            <person name="Tesfaigzi J."/>
            <person name="Th'ng J."/>
            <person name="Hotchkiss J.A."/>
            <person name="Harkema J.R."/>
            <person name="Wright P.S."/>
        </authorList>
    </citation>
    <scope>NUCLEOTIDE SEQUENCE [GENOMIC DNA]</scope>
    <source>
        <strain>Fischer 344/N</strain>
        <tissue>Nasal vestibule</tissue>
    </source>
</reference>
<sequence length="152" mass="16734">MSSQQQKQPCTVPPQLHQHEVKQPCQPPPQEPCAPKTKEPCHPIPEPCNPKVPEPCQPKVPEPCQPKVPEPCQPKVPEPCQPKVPEPCQPKVPEPCQPKVPEPCHPKAPEPCHPVVPEPCQPVAPEPCQPVVPEPCPPTVTPSPYQQKTKQK</sequence>